<reference key="1">
    <citation type="journal article" date="2002" name="Nature">
        <title>The genome sequence and structure of rice chromosome 1.</title>
        <authorList>
            <person name="Sasaki T."/>
            <person name="Matsumoto T."/>
            <person name="Yamamoto K."/>
            <person name="Sakata K."/>
            <person name="Baba T."/>
            <person name="Katayose Y."/>
            <person name="Wu J."/>
            <person name="Niimura Y."/>
            <person name="Cheng Z."/>
            <person name="Nagamura Y."/>
            <person name="Antonio B.A."/>
            <person name="Kanamori H."/>
            <person name="Hosokawa S."/>
            <person name="Masukawa M."/>
            <person name="Arikawa K."/>
            <person name="Chiden Y."/>
            <person name="Hayashi M."/>
            <person name="Okamoto M."/>
            <person name="Ando T."/>
            <person name="Aoki H."/>
            <person name="Arita K."/>
            <person name="Hamada M."/>
            <person name="Harada C."/>
            <person name="Hijishita S."/>
            <person name="Honda M."/>
            <person name="Ichikawa Y."/>
            <person name="Idonuma A."/>
            <person name="Iijima M."/>
            <person name="Ikeda M."/>
            <person name="Ikeno M."/>
            <person name="Ito S."/>
            <person name="Ito T."/>
            <person name="Ito Y."/>
            <person name="Ito Y."/>
            <person name="Iwabuchi A."/>
            <person name="Kamiya K."/>
            <person name="Karasawa W."/>
            <person name="Katagiri S."/>
            <person name="Kikuta A."/>
            <person name="Kobayashi N."/>
            <person name="Kono I."/>
            <person name="Machita K."/>
            <person name="Maehara T."/>
            <person name="Mizuno H."/>
            <person name="Mizubayashi T."/>
            <person name="Mukai Y."/>
            <person name="Nagasaki H."/>
            <person name="Nakashima M."/>
            <person name="Nakama Y."/>
            <person name="Nakamichi Y."/>
            <person name="Nakamura M."/>
            <person name="Namiki N."/>
            <person name="Negishi M."/>
            <person name="Ohta I."/>
            <person name="Ono N."/>
            <person name="Saji S."/>
            <person name="Sakai K."/>
            <person name="Shibata M."/>
            <person name="Shimokawa T."/>
            <person name="Shomura A."/>
            <person name="Song J."/>
            <person name="Takazaki Y."/>
            <person name="Terasawa K."/>
            <person name="Tsuji K."/>
            <person name="Waki K."/>
            <person name="Yamagata H."/>
            <person name="Yamane H."/>
            <person name="Yoshiki S."/>
            <person name="Yoshihara R."/>
            <person name="Yukawa K."/>
            <person name="Zhong H."/>
            <person name="Iwama H."/>
            <person name="Endo T."/>
            <person name="Ito H."/>
            <person name="Hahn J.H."/>
            <person name="Kim H.-I."/>
            <person name="Eun M.-Y."/>
            <person name="Yano M."/>
            <person name="Jiang J."/>
            <person name="Gojobori T."/>
        </authorList>
    </citation>
    <scope>NUCLEOTIDE SEQUENCE [LARGE SCALE GENOMIC DNA]</scope>
    <source>
        <strain>cv. Nipponbare</strain>
    </source>
</reference>
<reference key="2">
    <citation type="journal article" date="2005" name="Nature">
        <title>The map-based sequence of the rice genome.</title>
        <authorList>
            <consortium name="International rice genome sequencing project (IRGSP)"/>
        </authorList>
    </citation>
    <scope>NUCLEOTIDE SEQUENCE [LARGE SCALE GENOMIC DNA]</scope>
    <source>
        <strain>cv. Nipponbare</strain>
    </source>
</reference>
<reference key="3">
    <citation type="journal article" date="2008" name="Nucleic Acids Res.">
        <title>The rice annotation project database (RAP-DB): 2008 update.</title>
        <authorList>
            <consortium name="The rice annotation project (RAP)"/>
        </authorList>
    </citation>
    <scope>GENOME REANNOTATION</scope>
    <source>
        <strain>cv. Nipponbare</strain>
    </source>
</reference>
<reference key="4">
    <citation type="journal article" date="2013" name="Rice">
        <title>Improvement of the Oryza sativa Nipponbare reference genome using next generation sequence and optical map data.</title>
        <authorList>
            <person name="Kawahara Y."/>
            <person name="de la Bastide M."/>
            <person name="Hamilton J.P."/>
            <person name="Kanamori H."/>
            <person name="McCombie W.R."/>
            <person name="Ouyang S."/>
            <person name="Schwartz D.C."/>
            <person name="Tanaka T."/>
            <person name="Wu J."/>
            <person name="Zhou S."/>
            <person name="Childs K.L."/>
            <person name="Davidson R.M."/>
            <person name="Lin H."/>
            <person name="Quesada-Ocampo L."/>
            <person name="Vaillancourt B."/>
            <person name="Sakai H."/>
            <person name="Lee S.S."/>
            <person name="Kim J."/>
            <person name="Numa H."/>
            <person name="Itoh T."/>
            <person name="Buell C.R."/>
            <person name="Matsumoto T."/>
        </authorList>
    </citation>
    <scope>GENOME REANNOTATION</scope>
    <source>
        <strain>cv. Nipponbare</strain>
    </source>
</reference>
<reference key="5">
    <citation type="journal article" date="2005" name="PLoS Biol.">
        <title>The genomes of Oryza sativa: a history of duplications.</title>
        <authorList>
            <person name="Yu J."/>
            <person name="Wang J."/>
            <person name="Lin W."/>
            <person name="Li S."/>
            <person name="Li H."/>
            <person name="Zhou J."/>
            <person name="Ni P."/>
            <person name="Dong W."/>
            <person name="Hu S."/>
            <person name="Zeng C."/>
            <person name="Zhang J."/>
            <person name="Zhang Y."/>
            <person name="Li R."/>
            <person name="Xu Z."/>
            <person name="Li S."/>
            <person name="Li X."/>
            <person name="Zheng H."/>
            <person name="Cong L."/>
            <person name="Lin L."/>
            <person name="Yin J."/>
            <person name="Geng J."/>
            <person name="Li G."/>
            <person name="Shi J."/>
            <person name="Liu J."/>
            <person name="Lv H."/>
            <person name="Li J."/>
            <person name="Wang J."/>
            <person name="Deng Y."/>
            <person name="Ran L."/>
            <person name="Shi X."/>
            <person name="Wang X."/>
            <person name="Wu Q."/>
            <person name="Li C."/>
            <person name="Ren X."/>
            <person name="Wang J."/>
            <person name="Wang X."/>
            <person name="Li D."/>
            <person name="Liu D."/>
            <person name="Zhang X."/>
            <person name="Ji Z."/>
            <person name="Zhao W."/>
            <person name="Sun Y."/>
            <person name="Zhang Z."/>
            <person name="Bao J."/>
            <person name="Han Y."/>
            <person name="Dong L."/>
            <person name="Ji J."/>
            <person name="Chen P."/>
            <person name="Wu S."/>
            <person name="Liu J."/>
            <person name="Xiao Y."/>
            <person name="Bu D."/>
            <person name="Tan J."/>
            <person name="Yang L."/>
            <person name="Ye C."/>
            <person name="Zhang J."/>
            <person name="Xu J."/>
            <person name="Zhou Y."/>
            <person name="Yu Y."/>
            <person name="Zhang B."/>
            <person name="Zhuang S."/>
            <person name="Wei H."/>
            <person name="Liu B."/>
            <person name="Lei M."/>
            <person name="Yu H."/>
            <person name="Li Y."/>
            <person name="Xu H."/>
            <person name="Wei S."/>
            <person name="He X."/>
            <person name="Fang L."/>
            <person name="Zhang Z."/>
            <person name="Zhang Y."/>
            <person name="Huang X."/>
            <person name="Su Z."/>
            <person name="Tong W."/>
            <person name="Li J."/>
            <person name="Tong Z."/>
            <person name="Li S."/>
            <person name="Ye J."/>
            <person name="Wang L."/>
            <person name="Fang L."/>
            <person name="Lei T."/>
            <person name="Chen C.-S."/>
            <person name="Chen H.-C."/>
            <person name="Xu Z."/>
            <person name="Li H."/>
            <person name="Huang H."/>
            <person name="Zhang F."/>
            <person name="Xu H."/>
            <person name="Li N."/>
            <person name="Zhao C."/>
            <person name="Li S."/>
            <person name="Dong L."/>
            <person name="Huang Y."/>
            <person name="Li L."/>
            <person name="Xi Y."/>
            <person name="Qi Q."/>
            <person name="Li W."/>
            <person name="Zhang B."/>
            <person name="Hu W."/>
            <person name="Zhang Y."/>
            <person name="Tian X."/>
            <person name="Jiao Y."/>
            <person name="Liang X."/>
            <person name="Jin J."/>
            <person name="Gao L."/>
            <person name="Zheng W."/>
            <person name="Hao B."/>
            <person name="Liu S.-M."/>
            <person name="Wang W."/>
            <person name="Yuan L."/>
            <person name="Cao M."/>
            <person name="McDermott J."/>
            <person name="Samudrala R."/>
            <person name="Wang J."/>
            <person name="Wong G.K.-S."/>
            <person name="Yang H."/>
        </authorList>
    </citation>
    <scope>NUCLEOTIDE SEQUENCE [LARGE SCALE GENOMIC DNA]</scope>
    <source>
        <strain>cv. Nipponbare</strain>
    </source>
</reference>
<reference key="6">
    <citation type="journal article" date="2003" name="Science">
        <title>Collection, mapping, and annotation of over 28,000 cDNA clones from japonica rice.</title>
        <authorList>
            <consortium name="The rice full-length cDNA consortium"/>
        </authorList>
    </citation>
    <scope>NUCLEOTIDE SEQUENCE [LARGE SCALE MRNA]</scope>
    <source>
        <strain>cv. Nipponbare</strain>
    </source>
</reference>
<reference key="7">
    <citation type="journal article" date="2010" name="Nature">
        <title>Sugar transporters for intercellular exchange and nutrition of pathogens.</title>
        <authorList>
            <person name="Chen L.-Q."/>
            <person name="Hou B.-H."/>
            <person name="Lalonde S."/>
            <person name="Takanaga H."/>
            <person name="Hartung M.L."/>
            <person name="Qu X.-Q."/>
            <person name="Guo W.-J."/>
            <person name="Kim J.-G."/>
            <person name="Underwood W."/>
            <person name="Chaudhuri B."/>
            <person name="Chermak D."/>
            <person name="Antony G."/>
            <person name="White F.F."/>
            <person name="Somerville S.C."/>
            <person name="Mudgett M.B."/>
            <person name="Frommer W.B."/>
        </authorList>
    </citation>
    <scope>GENE FAMILY</scope>
    <scope>NOMENCLATURE</scope>
</reference>
<evidence type="ECO:0000250" key="1">
    <source>
        <dbReference type="UniProtKB" id="Q8L9J7"/>
    </source>
</evidence>
<evidence type="ECO:0000255" key="2"/>
<evidence type="ECO:0000305" key="3"/>
<evidence type="ECO:0007829" key="4">
    <source>
        <dbReference type="PDB" id="5CTG"/>
    </source>
</evidence>
<name>SWT2B_ORYSJ</name>
<feature type="chain" id="PRO_0000404121" description="Bidirectional sugar transporter SWEET2b">
    <location>
        <begin position="1"/>
        <end position="230"/>
    </location>
</feature>
<feature type="topological domain" description="Extracellular" evidence="2">
    <location>
        <begin position="1"/>
        <end position="6"/>
    </location>
</feature>
<feature type="transmembrane region" description="Helical; Name=1" evidence="2">
    <location>
        <begin position="7"/>
        <end position="27"/>
    </location>
</feature>
<feature type="topological domain" description="Cytoplasmic" evidence="2">
    <location>
        <begin position="28"/>
        <end position="45"/>
    </location>
</feature>
<feature type="transmembrane region" description="Helical; Name=2" evidence="2">
    <location>
        <begin position="46"/>
        <end position="66"/>
    </location>
</feature>
<feature type="topological domain" description="Extracellular" evidence="2">
    <location>
        <begin position="67"/>
        <end position="72"/>
    </location>
</feature>
<feature type="transmembrane region" description="Helical; Name=3" evidence="2">
    <location>
        <begin position="73"/>
        <end position="93"/>
    </location>
</feature>
<feature type="topological domain" description="Cytoplasmic" evidence="2">
    <location>
        <begin position="94"/>
        <end position="103"/>
    </location>
</feature>
<feature type="transmembrane region" description="Helical; Name=4" evidence="2">
    <location>
        <begin position="104"/>
        <end position="124"/>
    </location>
</feature>
<feature type="topological domain" description="Extracellular" evidence="2">
    <location>
        <begin position="125"/>
        <end position="137"/>
    </location>
</feature>
<feature type="transmembrane region" description="Helical; Name=5" evidence="2">
    <location>
        <begin position="138"/>
        <end position="158"/>
    </location>
</feature>
<feature type="topological domain" description="Cytoplasmic" evidence="2">
    <location>
        <begin position="159"/>
        <end position="167"/>
    </location>
</feature>
<feature type="transmembrane region" description="Helical; Name=6" evidence="2">
    <location>
        <begin position="168"/>
        <end position="188"/>
    </location>
</feature>
<feature type="topological domain" description="Extracellular" evidence="2">
    <location>
        <begin position="189"/>
        <end position="190"/>
    </location>
</feature>
<feature type="transmembrane region" description="Helical; Name=7" evidence="2">
    <location>
        <begin position="191"/>
        <end position="211"/>
    </location>
</feature>
<feature type="topological domain" description="Cytoplasmic" evidence="2">
    <location>
        <begin position="212"/>
        <end position="230"/>
    </location>
</feature>
<feature type="domain" description="MtN3/slv 1">
    <location>
        <begin position="13"/>
        <end position="98"/>
    </location>
</feature>
<feature type="domain" description="MtN3/slv 2">
    <location>
        <begin position="133"/>
        <end position="217"/>
    </location>
</feature>
<feature type="helix" evidence="4">
    <location>
        <begin position="3"/>
        <end position="25"/>
    </location>
</feature>
<feature type="helix" evidence="4">
    <location>
        <begin position="27"/>
        <end position="35"/>
    </location>
</feature>
<feature type="helix" evidence="4">
    <location>
        <begin position="36"/>
        <end position="38"/>
    </location>
</feature>
<feature type="helix" evidence="4">
    <location>
        <begin position="47"/>
        <end position="62"/>
    </location>
</feature>
<feature type="turn" evidence="4">
    <location>
        <begin position="64"/>
        <end position="66"/>
    </location>
</feature>
<feature type="strand" evidence="4">
    <location>
        <begin position="67"/>
        <end position="69"/>
    </location>
</feature>
<feature type="helix" evidence="4">
    <location>
        <begin position="71"/>
        <end position="93"/>
    </location>
</feature>
<feature type="helix" evidence="4">
    <location>
        <begin position="97"/>
        <end position="125"/>
    </location>
</feature>
<feature type="helix" evidence="4">
    <location>
        <begin position="130"/>
        <end position="146"/>
    </location>
</feature>
<feature type="helix" evidence="4">
    <location>
        <begin position="148"/>
        <end position="160"/>
    </location>
</feature>
<feature type="helix" evidence="4">
    <location>
        <begin position="168"/>
        <end position="187"/>
    </location>
</feature>
<feature type="helix" evidence="4">
    <location>
        <begin position="191"/>
        <end position="214"/>
    </location>
</feature>
<keyword id="KW-0002">3D-structure</keyword>
<keyword id="KW-1003">Cell membrane</keyword>
<keyword id="KW-0472">Membrane</keyword>
<keyword id="KW-1185">Reference proteome</keyword>
<keyword id="KW-0677">Repeat</keyword>
<keyword id="KW-0762">Sugar transport</keyword>
<keyword id="KW-0812">Transmembrane</keyword>
<keyword id="KW-1133">Transmembrane helix</keyword>
<keyword id="KW-0813">Transport</keyword>
<accession>Q5N8J1</accession>
<accession>A0A0P0V724</accession>
<protein>
    <recommendedName>
        <fullName>Bidirectional sugar transporter SWEET2b</fullName>
        <shortName>OsSWEET2b</shortName>
    </recommendedName>
</protein>
<sequence>MDSLYDISCFAAGLAGNIFALALFLSPVTTFKRILKAKSTERFDGLPYLFSLLNCLICLWYGLPWVADGRLLVATVNGIGAVFQLAYICLFIFYADSRKTRMKIIGLLVLVVCGFALVSHASVFFFDQPLRQQFVGAVSMASLISMFASPLAVMGVVIRSESVEFMPFYLSLSTFLMSASFALYGLLLRDFFIYFPNGLGLILGAMQLALYAYYSRKWRGQDSSAPLLLA</sequence>
<proteinExistence type="evidence at protein level"/>
<gene>
    <name type="primary">SWEET2B</name>
    <name type="ordered locus">Os01g0700100</name>
    <name type="ordered locus">LOC_Os01g50460</name>
    <name type="ORF">OsJ_03146</name>
    <name type="ORF">P0047E11.3</name>
    <name type="ORF">P0454A11.22</name>
</gene>
<organism>
    <name type="scientific">Oryza sativa subsp. japonica</name>
    <name type="common">Rice</name>
    <dbReference type="NCBI Taxonomy" id="39947"/>
    <lineage>
        <taxon>Eukaryota</taxon>
        <taxon>Viridiplantae</taxon>
        <taxon>Streptophyta</taxon>
        <taxon>Embryophyta</taxon>
        <taxon>Tracheophyta</taxon>
        <taxon>Spermatophyta</taxon>
        <taxon>Magnoliopsida</taxon>
        <taxon>Liliopsida</taxon>
        <taxon>Poales</taxon>
        <taxon>Poaceae</taxon>
        <taxon>BOP clade</taxon>
        <taxon>Oryzoideae</taxon>
        <taxon>Oryzeae</taxon>
        <taxon>Oryzinae</taxon>
        <taxon>Oryza</taxon>
        <taxon>Oryza sativa</taxon>
    </lineage>
</organism>
<comment type="function">
    <text evidence="1">Mediates both low-affinity uptake and efflux of sugar across the plasma membrane.</text>
</comment>
<comment type="subunit">
    <text evidence="1">Forms homooligomers and/or heterooligomers.</text>
</comment>
<comment type="interaction">
    <interactant intactId="EBI-16181754">
        <id>Q5N8J1</id>
    </interactant>
    <interactant intactId="EBI-16181754">
        <id>Q5N8J1</id>
        <label>SWEET2B</label>
    </interactant>
    <organismsDiffer>false</organismsDiffer>
    <experiments>4</experiments>
</comment>
<comment type="subcellular location">
    <subcellularLocation>
        <location evidence="1">Cell membrane</location>
        <topology evidence="1">Multi-pass membrane protein</topology>
    </subcellularLocation>
</comment>
<comment type="similarity">
    <text evidence="3">Belongs to the SWEET sugar transporter family.</text>
</comment>
<dbReference type="EMBL" id="AP003254">
    <property type="protein sequence ID" value="BAD81867.1"/>
    <property type="molecule type" value="Genomic_DNA"/>
</dbReference>
<dbReference type="EMBL" id="AP003378">
    <property type="protein sequence ID" value="BAD82209.1"/>
    <property type="molecule type" value="Genomic_DNA"/>
</dbReference>
<dbReference type="EMBL" id="AP008207">
    <property type="protein sequence ID" value="BAF05897.1"/>
    <property type="molecule type" value="Genomic_DNA"/>
</dbReference>
<dbReference type="EMBL" id="AP014957">
    <property type="protein sequence ID" value="BAS73885.1"/>
    <property type="molecule type" value="Genomic_DNA"/>
</dbReference>
<dbReference type="EMBL" id="CM000138">
    <property type="protein sequence ID" value="EEE55252.1"/>
    <property type="molecule type" value="Genomic_DNA"/>
</dbReference>
<dbReference type="EMBL" id="AK059965">
    <property type="protein sequence ID" value="BAG87245.1"/>
    <property type="molecule type" value="mRNA"/>
</dbReference>
<dbReference type="RefSeq" id="XP_015619426.1">
    <property type="nucleotide sequence ID" value="XM_015763940.1"/>
</dbReference>
<dbReference type="PDB" id="5CTG">
    <property type="method" value="X-ray"/>
    <property type="resolution" value="3.10 A"/>
    <property type="chains" value="A/B/C=1-215"/>
</dbReference>
<dbReference type="PDB" id="5CTH">
    <property type="method" value="X-ray"/>
    <property type="resolution" value="3.69 A"/>
    <property type="chains" value="A/B/C=1-215"/>
</dbReference>
<dbReference type="PDBsum" id="5CTG"/>
<dbReference type="PDBsum" id="5CTH"/>
<dbReference type="SMR" id="Q5N8J1"/>
<dbReference type="DIP" id="DIP-61790N"/>
<dbReference type="FunCoup" id="Q5N8J1">
    <property type="interactions" value="237"/>
</dbReference>
<dbReference type="TCDB" id="2.A.123.1.18">
    <property type="family name" value="the sweet, pq-loop, saliva, mtn3 (sweet) family"/>
</dbReference>
<dbReference type="PaxDb" id="39947-Q5N8J1"/>
<dbReference type="EnsemblPlants" id="Os01t0700100-01">
    <property type="protein sequence ID" value="Os01t0700100-01"/>
    <property type="gene ID" value="Os01g0700100"/>
</dbReference>
<dbReference type="Gramene" id="Os01t0700100-01">
    <property type="protein sequence ID" value="Os01t0700100-01"/>
    <property type="gene ID" value="Os01g0700100"/>
</dbReference>
<dbReference type="KEGG" id="dosa:Os01g0700100"/>
<dbReference type="eggNOG" id="KOG1623">
    <property type="taxonomic scope" value="Eukaryota"/>
</dbReference>
<dbReference type="HOGENOM" id="CLU_048643_1_1_1"/>
<dbReference type="InParanoid" id="Q5N8J1"/>
<dbReference type="OMA" id="CHSWLLY"/>
<dbReference type="OrthoDB" id="409725at2759"/>
<dbReference type="EvolutionaryTrace" id="Q5N8J1"/>
<dbReference type="Proteomes" id="UP000000763">
    <property type="component" value="Chromosome 1"/>
</dbReference>
<dbReference type="Proteomes" id="UP000007752">
    <property type="component" value="Chromosome 1"/>
</dbReference>
<dbReference type="Proteomes" id="UP000059680">
    <property type="component" value="Chromosome 1"/>
</dbReference>
<dbReference type="GO" id="GO:0016020">
    <property type="term" value="C:membrane"/>
    <property type="evidence" value="ECO:0000318"/>
    <property type="project" value="GO_Central"/>
</dbReference>
<dbReference type="GO" id="GO:0005886">
    <property type="term" value="C:plasma membrane"/>
    <property type="evidence" value="ECO:0000250"/>
    <property type="project" value="UniProtKB"/>
</dbReference>
<dbReference type="GO" id="GO:0042802">
    <property type="term" value="F:identical protein binding"/>
    <property type="evidence" value="ECO:0000353"/>
    <property type="project" value="IntAct"/>
</dbReference>
<dbReference type="GO" id="GO:0051119">
    <property type="term" value="F:sugar transmembrane transporter activity"/>
    <property type="evidence" value="ECO:0000250"/>
    <property type="project" value="UniProtKB"/>
</dbReference>
<dbReference type="GO" id="GO:0008643">
    <property type="term" value="P:carbohydrate transport"/>
    <property type="evidence" value="ECO:0000318"/>
    <property type="project" value="GO_Central"/>
</dbReference>
<dbReference type="FunFam" id="1.20.1280.290:FF:000001">
    <property type="entry name" value="Bidirectional sugar transporter SWEET"/>
    <property type="match status" value="1"/>
</dbReference>
<dbReference type="FunFam" id="1.20.1280.290:FF:000002">
    <property type="entry name" value="Bidirectional sugar transporter SWEET"/>
    <property type="match status" value="1"/>
</dbReference>
<dbReference type="Gene3D" id="1.20.1280.290">
    <property type="match status" value="2"/>
</dbReference>
<dbReference type="InterPro" id="IPR047664">
    <property type="entry name" value="SWEET"/>
</dbReference>
<dbReference type="InterPro" id="IPR004316">
    <property type="entry name" value="SWEET_rpt"/>
</dbReference>
<dbReference type="PANTHER" id="PTHR10791:SF54">
    <property type="entry name" value="BIDIRECTIONAL SUGAR TRANSPORTER SWEET2B"/>
    <property type="match status" value="1"/>
</dbReference>
<dbReference type="PANTHER" id="PTHR10791">
    <property type="entry name" value="RAG1-ACTIVATING PROTEIN 1"/>
    <property type="match status" value="1"/>
</dbReference>
<dbReference type="Pfam" id="PF03083">
    <property type="entry name" value="MtN3_slv"/>
    <property type="match status" value="2"/>
</dbReference>